<evidence type="ECO:0000250" key="1"/>
<dbReference type="PIR" id="A00291">
    <property type="entry name" value="AZPSCF"/>
</dbReference>
<dbReference type="SMR" id="P00285"/>
<dbReference type="GO" id="GO:0042597">
    <property type="term" value="C:periplasmic space"/>
    <property type="evidence" value="ECO:0007669"/>
    <property type="project" value="UniProtKB-SubCell"/>
</dbReference>
<dbReference type="GO" id="GO:0005507">
    <property type="term" value="F:copper ion binding"/>
    <property type="evidence" value="ECO:0007669"/>
    <property type="project" value="InterPro"/>
</dbReference>
<dbReference type="GO" id="GO:0009055">
    <property type="term" value="F:electron transfer activity"/>
    <property type="evidence" value="ECO:0007669"/>
    <property type="project" value="InterPro"/>
</dbReference>
<dbReference type="CDD" id="cd13922">
    <property type="entry name" value="Azurin"/>
    <property type="match status" value="1"/>
</dbReference>
<dbReference type="FunFam" id="2.60.40.420:FF:000040">
    <property type="entry name" value="Azurin"/>
    <property type="match status" value="1"/>
</dbReference>
<dbReference type="Gene3D" id="2.60.40.420">
    <property type="entry name" value="Cupredoxins - blue copper proteins"/>
    <property type="match status" value="1"/>
</dbReference>
<dbReference type="InterPro" id="IPR014068">
    <property type="entry name" value="Azurin"/>
</dbReference>
<dbReference type="InterPro" id="IPR000923">
    <property type="entry name" value="BlueCu_1"/>
</dbReference>
<dbReference type="InterPro" id="IPR028871">
    <property type="entry name" value="BlueCu_1_BS"/>
</dbReference>
<dbReference type="InterPro" id="IPR050845">
    <property type="entry name" value="Cu-binding_ET"/>
</dbReference>
<dbReference type="InterPro" id="IPR008972">
    <property type="entry name" value="Cupredoxin"/>
</dbReference>
<dbReference type="NCBIfam" id="TIGR02695">
    <property type="entry name" value="azurin"/>
    <property type="match status" value="1"/>
</dbReference>
<dbReference type="PANTHER" id="PTHR38439">
    <property type="entry name" value="AURACYANIN-B"/>
    <property type="match status" value="1"/>
</dbReference>
<dbReference type="PANTHER" id="PTHR38439:SF2">
    <property type="entry name" value="OUTER MEMBRANE PROTEIN H.8"/>
    <property type="match status" value="1"/>
</dbReference>
<dbReference type="Pfam" id="PF00127">
    <property type="entry name" value="Copper-bind"/>
    <property type="match status" value="1"/>
</dbReference>
<dbReference type="SUPFAM" id="SSF49503">
    <property type="entry name" value="Cupredoxins"/>
    <property type="match status" value="1"/>
</dbReference>
<dbReference type="PROSITE" id="PS00196">
    <property type="entry name" value="COPPER_BLUE"/>
    <property type="match status" value="1"/>
</dbReference>
<keyword id="KW-0186">Copper</keyword>
<keyword id="KW-0903">Direct protein sequencing</keyword>
<keyword id="KW-1015">Disulfide bond</keyword>
<keyword id="KW-0249">Electron transport</keyword>
<keyword id="KW-0479">Metal-binding</keyword>
<keyword id="KW-0574">Periplasm</keyword>
<keyword id="KW-0813">Transport</keyword>
<sequence>AECKVTVDSTDQMSFDTKAIEIDKSCKTFTVDLKHSGNLPKNVMGHNWVLTTQADMQPVATDGMAAGIDKNYLKEGDTRIIAHTKIIGAGETDSVTFDVSKLKADGKYMFFCSFPGHIAMMKGTVTLK</sequence>
<name>AZUR_PSEFC</name>
<accession>P00285</accession>
<reference key="1">
    <citation type="book" date="1971" name="Developpements recents dans l'etude chimique de la structure des proteines">
        <editorList>
            <person name="Preverio A."/>
            <person name="Pechere J.-F."/>
            <person name="Coletti-preverio M.-A."/>
        </editorList>
        <authorList>
            <person name="Ambler R.P."/>
        </authorList>
    </citation>
    <scope>PROTEIN SEQUENCE</scope>
    <source>
        <strain>ATCC 17400 / DSM 50117 / ICPB 2656-18 / NBRC 15833 / NCIMB 10460 / Stanier C-18</strain>
    </source>
</reference>
<proteinExistence type="evidence at protein level"/>
<organism>
    <name type="scientific">Pseudomonas fluorescens biotype C</name>
    <dbReference type="NCBI Taxonomy" id="335"/>
    <lineage>
        <taxon>Bacteria</taxon>
        <taxon>Pseudomonadati</taxon>
        <taxon>Pseudomonadota</taxon>
        <taxon>Gammaproteobacteria</taxon>
        <taxon>Pseudomonadales</taxon>
        <taxon>Pseudomonadaceae</taxon>
        <taxon>Pseudomonas</taxon>
    </lineage>
</organism>
<protein>
    <recommendedName>
        <fullName>Azurin</fullName>
    </recommendedName>
</protein>
<comment type="function">
    <text>Transfers electrons from cytochrome c551 to cytochrome oxidase.</text>
</comment>
<comment type="subcellular location">
    <subcellularLocation>
        <location>Periplasm</location>
    </subcellularLocation>
</comment>
<feature type="chain" id="PRO_0000085550" description="Azurin">
    <location>
        <begin position="1"/>
        <end position="128"/>
    </location>
</feature>
<feature type="domain" description="Plastocyanin-like">
    <location>
        <begin position="1"/>
        <end position="128"/>
    </location>
</feature>
<feature type="binding site" evidence="1">
    <location>
        <position position="46"/>
    </location>
    <ligand>
        <name>Cu cation</name>
        <dbReference type="ChEBI" id="CHEBI:23378"/>
    </ligand>
</feature>
<feature type="binding site" evidence="1">
    <location>
        <position position="112"/>
    </location>
    <ligand>
        <name>Cu cation</name>
        <dbReference type="ChEBI" id="CHEBI:23378"/>
    </ligand>
</feature>
<feature type="binding site" evidence="1">
    <location>
        <position position="117"/>
    </location>
    <ligand>
        <name>Cu cation</name>
        <dbReference type="ChEBI" id="CHEBI:23378"/>
    </ligand>
</feature>
<feature type="binding site" evidence="1">
    <location>
        <position position="121"/>
    </location>
    <ligand>
        <name>Cu cation</name>
        <dbReference type="ChEBI" id="CHEBI:23378"/>
    </ligand>
</feature>
<feature type="disulfide bond" evidence="1">
    <location>
        <begin position="3"/>
        <end position="26"/>
    </location>
</feature>
<feature type="unsure residue" description="Assigned by comparison with orthologs">
    <location>
        <position position="8"/>
    </location>
</feature>
<feature type="unsure residue" description="Assigned by comparison with orthologs">
    <location>
        <position position="11"/>
    </location>
</feature>
<feature type="unsure residue" description="Assigned by comparison with orthologs">
    <location>
        <position position="12"/>
    </location>
</feature>
<feature type="unsure residue" description="Assigned by comparison with orthologs">
    <location>
        <position position="55"/>
    </location>
</feature>